<protein>
    <recommendedName>
        <fullName evidence="1">Orotate phosphoribosyltransferase</fullName>
        <shortName evidence="1">OPRT</shortName>
        <shortName evidence="1">OPRTase</shortName>
        <ecNumber evidence="1">2.4.2.10</ecNumber>
    </recommendedName>
</protein>
<keyword id="KW-0328">Glycosyltransferase</keyword>
<keyword id="KW-0460">Magnesium</keyword>
<keyword id="KW-0665">Pyrimidine biosynthesis</keyword>
<keyword id="KW-1185">Reference proteome</keyword>
<keyword id="KW-0808">Transferase</keyword>
<feature type="chain" id="PRO_1000085548" description="Orotate phosphoribosyltransferase">
    <location>
        <begin position="1"/>
        <end position="222"/>
    </location>
</feature>
<feature type="binding site" description="in other chain" evidence="1">
    <location>
        <position position="29"/>
    </location>
    <ligand>
        <name>5-phospho-alpha-D-ribose 1-diphosphate</name>
        <dbReference type="ChEBI" id="CHEBI:58017"/>
        <note>ligand shared between dimeric partners</note>
    </ligand>
</feature>
<feature type="binding site" evidence="1">
    <location>
        <begin position="37"/>
        <end position="38"/>
    </location>
    <ligand>
        <name>orotate</name>
        <dbReference type="ChEBI" id="CHEBI:30839"/>
    </ligand>
</feature>
<feature type="binding site" description="in other chain" evidence="1">
    <location>
        <begin position="75"/>
        <end position="76"/>
    </location>
    <ligand>
        <name>5-phospho-alpha-D-ribose 1-diphosphate</name>
        <dbReference type="ChEBI" id="CHEBI:58017"/>
        <note>ligand shared between dimeric partners</note>
    </ligand>
</feature>
<feature type="binding site" evidence="1">
    <location>
        <position position="101"/>
    </location>
    <ligand>
        <name>5-phospho-alpha-D-ribose 1-diphosphate</name>
        <dbReference type="ChEBI" id="CHEBI:58017"/>
        <note>ligand shared between dimeric partners</note>
    </ligand>
</feature>
<feature type="binding site" description="in other chain" evidence="1">
    <location>
        <position position="102"/>
    </location>
    <ligand>
        <name>5-phospho-alpha-D-ribose 1-diphosphate</name>
        <dbReference type="ChEBI" id="CHEBI:58017"/>
        <note>ligand shared between dimeric partners</note>
    </ligand>
</feature>
<feature type="binding site" evidence="1">
    <location>
        <position position="105"/>
    </location>
    <ligand>
        <name>5-phospho-alpha-D-ribose 1-diphosphate</name>
        <dbReference type="ChEBI" id="CHEBI:58017"/>
        <note>ligand shared between dimeric partners</note>
    </ligand>
</feature>
<feature type="binding site" evidence="1">
    <location>
        <position position="107"/>
    </location>
    <ligand>
        <name>5-phospho-alpha-D-ribose 1-diphosphate</name>
        <dbReference type="ChEBI" id="CHEBI:58017"/>
        <note>ligand shared between dimeric partners</note>
    </ligand>
</feature>
<feature type="binding site" description="in other chain" evidence="1">
    <location>
        <begin position="126"/>
        <end position="134"/>
    </location>
    <ligand>
        <name>5-phospho-alpha-D-ribose 1-diphosphate</name>
        <dbReference type="ChEBI" id="CHEBI:58017"/>
        <note>ligand shared between dimeric partners</note>
    </ligand>
</feature>
<feature type="binding site" evidence="1">
    <location>
        <position position="130"/>
    </location>
    <ligand>
        <name>orotate</name>
        <dbReference type="ChEBI" id="CHEBI:30839"/>
    </ligand>
</feature>
<feature type="binding site" evidence="1">
    <location>
        <position position="158"/>
    </location>
    <ligand>
        <name>orotate</name>
        <dbReference type="ChEBI" id="CHEBI:30839"/>
    </ligand>
</feature>
<gene>
    <name evidence="1" type="primary">pyrE</name>
    <name type="ordered locus">Pnuc_2007</name>
</gene>
<organism>
    <name type="scientific">Polynucleobacter asymbioticus (strain DSM 18221 / CIP 109841 / QLW-P1DMWA-1)</name>
    <name type="common">Polynucleobacter necessarius subsp. asymbioticus</name>
    <dbReference type="NCBI Taxonomy" id="312153"/>
    <lineage>
        <taxon>Bacteria</taxon>
        <taxon>Pseudomonadati</taxon>
        <taxon>Pseudomonadota</taxon>
        <taxon>Betaproteobacteria</taxon>
        <taxon>Burkholderiales</taxon>
        <taxon>Burkholderiaceae</taxon>
        <taxon>Polynucleobacter</taxon>
    </lineage>
</organism>
<sequence length="222" mass="23570">MSSNNSNQDNFIRFALEAKVLSFGEFKTKAGRLSPYFFNAGGFNDGARLSALGRYYAKALQESNIQFDMLYGPAYKGITLAAATVIALADAGLNVPYAYNRKEAKDHGEGGVLVGAPVKGKVVIIDDVISAGTSVRESVDLIRKAGAEPTAVLIALDRMERSGTAAEIGAKSAVQAVEEEFGLPVISIANLTGVMSFLTASSDVQLSNYLPAVKAYRDKYGI</sequence>
<evidence type="ECO:0000255" key="1">
    <source>
        <dbReference type="HAMAP-Rule" id="MF_01208"/>
    </source>
</evidence>
<accession>A4T0F4</accession>
<dbReference type="EC" id="2.4.2.10" evidence="1"/>
<dbReference type="EMBL" id="CP000655">
    <property type="protein sequence ID" value="ABP35218.1"/>
    <property type="molecule type" value="Genomic_DNA"/>
</dbReference>
<dbReference type="RefSeq" id="WP_011903841.1">
    <property type="nucleotide sequence ID" value="NC_009379.1"/>
</dbReference>
<dbReference type="SMR" id="A4T0F4"/>
<dbReference type="GeneID" id="31482397"/>
<dbReference type="KEGG" id="pnu:Pnuc_2007"/>
<dbReference type="eggNOG" id="COG0461">
    <property type="taxonomic scope" value="Bacteria"/>
</dbReference>
<dbReference type="HOGENOM" id="CLU_074878_0_1_4"/>
<dbReference type="UniPathway" id="UPA00070">
    <property type="reaction ID" value="UER00119"/>
</dbReference>
<dbReference type="Proteomes" id="UP000000231">
    <property type="component" value="Chromosome"/>
</dbReference>
<dbReference type="GO" id="GO:0005737">
    <property type="term" value="C:cytoplasm"/>
    <property type="evidence" value="ECO:0007669"/>
    <property type="project" value="TreeGrafter"/>
</dbReference>
<dbReference type="GO" id="GO:0000287">
    <property type="term" value="F:magnesium ion binding"/>
    <property type="evidence" value="ECO:0007669"/>
    <property type="project" value="UniProtKB-UniRule"/>
</dbReference>
<dbReference type="GO" id="GO:0004588">
    <property type="term" value="F:orotate phosphoribosyltransferase activity"/>
    <property type="evidence" value="ECO:0007669"/>
    <property type="project" value="UniProtKB-UniRule"/>
</dbReference>
<dbReference type="GO" id="GO:0006207">
    <property type="term" value="P:'de novo' pyrimidine nucleobase biosynthetic process"/>
    <property type="evidence" value="ECO:0007669"/>
    <property type="project" value="TreeGrafter"/>
</dbReference>
<dbReference type="GO" id="GO:0044205">
    <property type="term" value="P:'de novo' UMP biosynthetic process"/>
    <property type="evidence" value="ECO:0007669"/>
    <property type="project" value="UniProtKB-UniRule"/>
</dbReference>
<dbReference type="GO" id="GO:0046132">
    <property type="term" value="P:pyrimidine ribonucleoside biosynthetic process"/>
    <property type="evidence" value="ECO:0007669"/>
    <property type="project" value="TreeGrafter"/>
</dbReference>
<dbReference type="CDD" id="cd06223">
    <property type="entry name" value="PRTases_typeI"/>
    <property type="match status" value="1"/>
</dbReference>
<dbReference type="FunFam" id="3.40.50.2020:FF:000008">
    <property type="entry name" value="Orotate phosphoribosyltransferase"/>
    <property type="match status" value="1"/>
</dbReference>
<dbReference type="Gene3D" id="3.40.50.2020">
    <property type="match status" value="1"/>
</dbReference>
<dbReference type="HAMAP" id="MF_01208">
    <property type="entry name" value="PyrE"/>
    <property type="match status" value="1"/>
</dbReference>
<dbReference type="InterPro" id="IPR023031">
    <property type="entry name" value="OPRT"/>
</dbReference>
<dbReference type="InterPro" id="IPR004467">
    <property type="entry name" value="Or_phspho_trans_dom"/>
</dbReference>
<dbReference type="InterPro" id="IPR000836">
    <property type="entry name" value="PRibTrfase_dom"/>
</dbReference>
<dbReference type="InterPro" id="IPR029057">
    <property type="entry name" value="PRTase-like"/>
</dbReference>
<dbReference type="NCBIfam" id="TIGR00336">
    <property type="entry name" value="pyrE"/>
    <property type="match status" value="1"/>
</dbReference>
<dbReference type="PANTHER" id="PTHR46683">
    <property type="entry name" value="OROTATE PHOSPHORIBOSYLTRANSFERASE 1-RELATED"/>
    <property type="match status" value="1"/>
</dbReference>
<dbReference type="PANTHER" id="PTHR46683:SF1">
    <property type="entry name" value="OROTATE PHOSPHORIBOSYLTRANSFERASE 1-RELATED"/>
    <property type="match status" value="1"/>
</dbReference>
<dbReference type="Pfam" id="PF00156">
    <property type="entry name" value="Pribosyltran"/>
    <property type="match status" value="1"/>
</dbReference>
<dbReference type="SUPFAM" id="SSF53271">
    <property type="entry name" value="PRTase-like"/>
    <property type="match status" value="1"/>
</dbReference>
<dbReference type="PROSITE" id="PS00103">
    <property type="entry name" value="PUR_PYR_PR_TRANSFER"/>
    <property type="match status" value="1"/>
</dbReference>
<name>PYRE_POLAQ</name>
<proteinExistence type="inferred from homology"/>
<comment type="function">
    <text evidence="1">Catalyzes the transfer of a ribosyl phosphate group from 5-phosphoribose 1-diphosphate to orotate, leading to the formation of orotidine monophosphate (OMP).</text>
</comment>
<comment type="catalytic activity">
    <reaction evidence="1">
        <text>orotidine 5'-phosphate + diphosphate = orotate + 5-phospho-alpha-D-ribose 1-diphosphate</text>
        <dbReference type="Rhea" id="RHEA:10380"/>
        <dbReference type="ChEBI" id="CHEBI:30839"/>
        <dbReference type="ChEBI" id="CHEBI:33019"/>
        <dbReference type="ChEBI" id="CHEBI:57538"/>
        <dbReference type="ChEBI" id="CHEBI:58017"/>
        <dbReference type="EC" id="2.4.2.10"/>
    </reaction>
</comment>
<comment type="cofactor">
    <cofactor evidence="1">
        <name>Mg(2+)</name>
        <dbReference type="ChEBI" id="CHEBI:18420"/>
    </cofactor>
</comment>
<comment type="pathway">
    <text evidence="1">Pyrimidine metabolism; UMP biosynthesis via de novo pathway; UMP from orotate: step 1/2.</text>
</comment>
<comment type="subunit">
    <text evidence="1">Homodimer.</text>
</comment>
<comment type="similarity">
    <text evidence="1">Belongs to the purine/pyrimidine phosphoribosyltransferase family. PyrE subfamily.</text>
</comment>
<reference key="1">
    <citation type="journal article" date="2012" name="Stand. Genomic Sci.">
        <title>Complete genome sequence of Polynucleobacter necessarius subsp. asymbioticus type strain (QLW-P1DMWA-1(T)).</title>
        <authorList>
            <person name="Meincke L."/>
            <person name="Copeland A."/>
            <person name="Lapidus A."/>
            <person name="Lucas S."/>
            <person name="Berry K.W."/>
            <person name="Del Rio T.G."/>
            <person name="Hammon N."/>
            <person name="Dalin E."/>
            <person name="Tice H."/>
            <person name="Pitluck S."/>
            <person name="Richardson P."/>
            <person name="Bruce D."/>
            <person name="Goodwin L."/>
            <person name="Han C."/>
            <person name="Tapia R."/>
            <person name="Detter J.C."/>
            <person name="Schmutz J."/>
            <person name="Brettin T."/>
            <person name="Larimer F."/>
            <person name="Land M."/>
            <person name="Hauser L."/>
            <person name="Kyrpides N.C."/>
            <person name="Ivanova N."/>
            <person name="Goker M."/>
            <person name="Woyke T."/>
            <person name="Wu Q.L."/>
            <person name="Pockl M."/>
            <person name="Hahn M.W."/>
            <person name="Klenk H.P."/>
        </authorList>
    </citation>
    <scope>NUCLEOTIDE SEQUENCE [LARGE SCALE GENOMIC DNA]</scope>
    <source>
        <strain>DSM 18221 / CIP 109841 / QLW-P1DMWA-1</strain>
    </source>
</reference>